<gene>
    <name type="primary">NCF1C</name>
    <name type="synonym">SH3PXD1C</name>
</gene>
<name>NCF1C_HUMAN</name>
<feature type="chain" id="PRO_0000349368" description="Putative neutrophil cytosol factor 1C">
    <location>
        <begin position="1"/>
        <end position="366"/>
    </location>
</feature>
<feature type="domain" description="PX" evidence="3">
    <location>
        <begin position="1"/>
        <end position="101"/>
    </location>
</feature>
<feature type="domain" description="SH3 1" evidence="4">
    <location>
        <begin position="132"/>
        <end position="191"/>
    </location>
</feature>
<feature type="domain" description="SH3 2" evidence="4">
    <location>
        <begin position="202"/>
        <end position="261"/>
    </location>
</feature>
<feature type="region of interest" description="Disordered" evidence="5">
    <location>
        <begin position="261"/>
        <end position="366"/>
    </location>
</feature>
<feature type="compositionally biased region" description="Basic residues" evidence="5">
    <location>
        <begin position="285"/>
        <end position="294"/>
    </location>
</feature>
<feature type="modified residue" description="Phosphoserine" evidence="2">
    <location>
        <position position="279"/>
    </location>
</feature>
<feature type="modified residue" description="Phosphoserine" evidence="2">
    <location>
        <position position="280"/>
    </location>
</feature>
<feature type="modified residue" description="Phosphoserine" evidence="2">
    <location>
        <position position="296"/>
    </location>
</feature>
<feature type="modified residue" description="Phosphoserine" evidence="2">
    <location>
        <position position="304"/>
    </location>
</feature>
<feature type="modified residue" description="Phosphoserine" evidence="2">
    <location>
        <position position="321"/>
    </location>
</feature>
<feature type="modified residue" description="Phosphoserine" evidence="2">
    <location>
        <position position="324"/>
    </location>
</feature>
<comment type="function">
    <text evidence="1">May be required for activation of the latent NADPH oxidase (necessary for superoxide production).</text>
</comment>
<comment type="subcellular location">
    <subcellularLocation>
        <location evidence="1">Cytoplasm</location>
    </subcellularLocation>
</comment>
<comment type="caution">
    <text evidence="6">Could be the product of a pseudogene.</text>
</comment>
<protein>
    <recommendedName>
        <fullName>Putative neutrophil cytosol factor 1C</fullName>
        <shortName>NCF-1C</shortName>
    </recommendedName>
    <alternativeName>
        <fullName>Putative SH3 and PX domain-containing protein 1C</fullName>
    </alternativeName>
</protein>
<proteinExistence type="uncertain"/>
<dbReference type="EMBL" id="AC124781">
    <property type="status" value="NOT_ANNOTATED_CDS"/>
    <property type="molecule type" value="Genomic_DNA"/>
</dbReference>
<dbReference type="BMRB" id="A8MVU1"/>
<dbReference type="SMR" id="A8MVU1"/>
<dbReference type="FunCoup" id="A8MVU1">
    <property type="interactions" value="7"/>
</dbReference>
<dbReference type="IntAct" id="A8MVU1">
    <property type="interactions" value="1"/>
</dbReference>
<dbReference type="iPTMnet" id="A8MVU1"/>
<dbReference type="BioMuta" id="HGNC:32523"/>
<dbReference type="jPOST" id="A8MVU1"/>
<dbReference type="MassIVE" id="A8MVU1"/>
<dbReference type="PeptideAtlas" id="A8MVU1"/>
<dbReference type="ProteomicsDB" id="2205"/>
<dbReference type="Pumba" id="A8MVU1"/>
<dbReference type="AGR" id="HGNC:32523"/>
<dbReference type="GeneCards" id="NCF1C"/>
<dbReference type="HGNC" id="HGNC:32523">
    <property type="gene designation" value="NCF1C"/>
</dbReference>
<dbReference type="neXtProt" id="NX_A8MVU1"/>
<dbReference type="InParanoid" id="A8MVU1"/>
<dbReference type="PAN-GO" id="A8MVU1">
    <property type="GO annotations" value="5 GO annotations based on evolutionary models"/>
</dbReference>
<dbReference type="PhylomeDB" id="A8MVU1"/>
<dbReference type="ChiTaRS" id="NCF1C">
    <property type="organism name" value="human"/>
</dbReference>
<dbReference type="Pharos" id="A8MVU1">
    <property type="development level" value="Tdark"/>
</dbReference>
<dbReference type="Proteomes" id="UP000005640">
    <property type="component" value="Unplaced"/>
</dbReference>
<dbReference type="RNAct" id="A8MVU1">
    <property type="molecule type" value="protein"/>
</dbReference>
<dbReference type="GO" id="GO:0005737">
    <property type="term" value="C:cytoplasm"/>
    <property type="evidence" value="ECO:0000318"/>
    <property type="project" value="GO_Central"/>
</dbReference>
<dbReference type="GO" id="GO:0043020">
    <property type="term" value="C:NADPH oxidase complex"/>
    <property type="evidence" value="ECO:0000318"/>
    <property type="project" value="GO_Central"/>
</dbReference>
<dbReference type="GO" id="GO:0035091">
    <property type="term" value="F:phosphatidylinositol binding"/>
    <property type="evidence" value="ECO:0007669"/>
    <property type="project" value="InterPro"/>
</dbReference>
<dbReference type="GO" id="GO:0016176">
    <property type="term" value="F:superoxide-generating NADPH oxidase activator activity"/>
    <property type="evidence" value="ECO:0000318"/>
    <property type="project" value="GO_Central"/>
</dbReference>
<dbReference type="GO" id="GO:0045730">
    <property type="term" value="P:respiratory burst"/>
    <property type="evidence" value="ECO:0000318"/>
    <property type="project" value="GO_Central"/>
</dbReference>
<dbReference type="GO" id="GO:0042554">
    <property type="term" value="P:superoxide anion generation"/>
    <property type="evidence" value="ECO:0000318"/>
    <property type="project" value="GO_Central"/>
</dbReference>
<dbReference type="CDD" id="cd12021">
    <property type="entry name" value="SH3_p47phox_1"/>
    <property type="match status" value="1"/>
</dbReference>
<dbReference type="CDD" id="cd12022">
    <property type="entry name" value="SH3_p47phox_2"/>
    <property type="match status" value="1"/>
</dbReference>
<dbReference type="FunFam" id="2.30.30.40:FF:000121">
    <property type="entry name" value="Neutrophil cytosol factor 1"/>
    <property type="match status" value="1"/>
</dbReference>
<dbReference type="FunFam" id="3.30.1520.10:FF:000023">
    <property type="entry name" value="Neutrophil cytosol factor 1"/>
    <property type="match status" value="1"/>
</dbReference>
<dbReference type="FunFam" id="2.30.30.40:FF:000127">
    <property type="entry name" value="neutrophil cytosol factor 1"/>
    <property type="match status" value="1"/>
</dbReference>
<dbReference type="Gene3D" id="3.30.1520.10">
    <property type="entry name" value="Phox-like domain"/>
    <property type="match status" value="1"/>
</dbReference>
<dbReference type="Gene3D" id="2.30.30.40">
    <property type="entry name" value="SH3 Domains"/>
    <property type="match status" value="2"/>
</dbReference>
<dbReference type="InterPro" id="IPR051228">
    <property type="entry name" value="NADPH_Oxidase/PX-Domain"/>
</dbReference>
<dbReference type="InterPro" id="IPR015039">
    <property type="entry name" value="NCF1_C"/>
</dbReference>
<dbReference type="InterPro" id="IPR032136">
    <property type="entry name" value="NCF1_PBR/AIR"/>
</dbReference>
<dbReference type="InterPro" id="IPR035756">
    <property type="entry name" value="NCF1_SH3_1"/>
</dbReference>
<dbReference type="InterPro" id="IPR035757">
    <property type="entry name" value="NCF1_SH3_2"/>
</dbReference>
<dbReference type="InterPro" id="IPR001655">
    <property type="entry name" value="P47PHOX"/>
</dbReference>
<dbReference type="InterPro" id="IPR001683">
    <property type="entry name" value="PX_dom"/>
</dbReference>
<dbReference type="InterPro" id="IPR036871">
    <property type="entry name" value="PX_dom_sf"/>
</dbReference>
<dbReference type="InterPro" id="IPR036028">
    <property type="entry name" value="SH3-like_dom_sf"/>
</dbReference>
<dbReference type="InterPro" id="IPR001452">
    <property type="entry name" value="SH3_domain"/>
</dbReference>
<dbReference type="PANTHER" id="PTHR15706:SF6">
    <property type="entry name" value="NEUTROPHIL CYTOSOL FACTOR 1-RELATED"/>
    <property type="match status" value="1"/>
</dbReference>
<dbReference type="PANTHER" id="PTHR15706">
    <property type="entry name" value="SH3 MULTIPLE DOMAIN"/>
    <property type="match status" value="1"/>
</dbReference>
<dbReference type="Pfam" id="PF16621">
    <property type="entry name" value="NCF1_PBR_AIR"/>
    <property type="match status" value="1"/>
</dbReference>
<dbReference type="Pfam" id="PF08944">
    <property type="entry name" value="p47_phox_C"/>
    <property type="match status" value="1"/>
</dbReference>
<dbReference type="Pfam" id="PF00787">
    <property type="entry name" value="PX"/>
    <property type="match status" value="1"/>
</dbReference>
<dbReference type="Pfam" id="PF00018">
    <property type="entry name" value="SH3_1"/>
    <property type="match status" value="2"/>
</dbReference>
<dbReference type="PRINTS" id="PR00498">
    <property type="entry name" value="P47PHOX"/>
</dbReference>
<dbReference type="PRINTS" id="PR00452">
    <property type="entry name" value="SH3DOMAIN"/>
</dbReference>
<dbReference type="SMART" id="SM00312">
    <property type="entry name" value="PX"/>
    <property type="match status" value="1"/>
</dbReference>
<dbReference type="SMART" id="SM00326">
    <property type="entry name" value="SH3"/>
    <property type="match status" value="2"/>
</dbReference>
<dbReference type="SUPFAM" id="SSF64268">
    <property type="entry name" value="PX domain"/>
    <property type="match status" value="1"/>
</dbReference>
<dbReference type="SUPFAM" id="SSF50044">
    <property type="entry name" value="SH3-domain"/>
    <property type="match status" value="2"/>
</dbReference>
<dbReference type="PROSITE" id="PS50195">
    <property type="entry name" value="PX"/>
    <property type="match status" value="1"/>
</dbReference>
<dbReference type="PROSITE" id="PS50002">
    <property type="entry name" value="SH3"/>
    <property type="match status" value="2"/>
</dbReference>
<evidence type="ECO:0000250" key="1"/>
<evidence type="ECO:0000250" key="2">
    <source>
        <dbReference type="UniProtKB" id="P14598"/>
    </source>
</evidence>
<evidence type="ECO:0000255" key="3">
    <source>
        <dbReference type="PROSITE-ProRule" id="PRU00147"/>
    </source>
</evidence>
<evidence type="ECO:0000255" key="4">
    <source>
        <dbReference type="PROSITE-ProRule" id="PRU00192"/>
    </source>
</evidence>
<evidence type="ECO:0000256" key="5">
    <source>
        <dbReference type="SAM" id="MobiDB-lite"/>
    </source>
</evidence>
<evidence type="ECO:0000305" key="6"/>
<sequence length="366" mass="41851">MYMFLVKWQDLSEKVVYRRFTEIYEFHKTLKEMFPIEAGAINPENRIIPHLPAPKWFDGQRAAENHQGTLTEYCSTLMSLPTKISRCPHLLDFFKVRPDDLKLPTDNQTKKPETYLMPKDGKSTATDITGPIILQTYRAIADYEKTSGSEMALSTGDVVEVVEKSESGWWFCQMKAKRGWIPASFLEPLDSPDETEDPEPNYAGEPYVAIKAYTAVEGDEVSLLEGEAVEVIHKLLDGWWVIRKDDVTGYFPSMYLQKSGQDVSQAQRQIKRGAPPRRSSIRNAHSIHQRSRKRLSQDAYRRNSVRFLQQRRRQARPGPQSPGSPLEEERQTQRSKPQPAVPPRPSADLILNRCSESTKRKLASAV</sequence>
<accession>A8MVU1</accession>
<organism>
    <name type="scientific">Homo sapiens</name>
    <name type="common">Human</name>
    <dbReference type="NCBI Taxonomy" id="9606"/>
    <lineage>
        <taxon>Eukaryota</taxon>
        <taxon>Metazoa</taxon>
        <taxon>Chordata</taxon>
        <taxon>Craniata</taxon>
        <taxon>Vertebrata</taxon>
        <taxon>Euteleostomi</taxon>
        <taxon>Mammalia</taxon>
        <taxon>Eutheria</taxon>
        <taxon>Euarchontoglires</taxon>
        <taxon>Primates</taxon>
        <taxon>Haplorrhini</taxon>
        <taxon>Catarrhini</taxon>
        <taxon>Hominidae</taxon>
        <taxon>Homo</taxon>
    </lineage>
</organism>
<keyword id="KW-0963">Cytoplasm</keyword>
<keyword id="KW-0597">Phosphoprotein</keyword>
<keyword id="KW-1267">Proteomics identification</keyword>
<keyword id="KW-1185">Reference proteome</keyword>
<keyword id="KW-0677">Repeat</keyword>
<keyword id="KW-0728">SH3 domain</keyword>
<reference key="1">
    <citation type="journal article" date="2003" name="Nature">
        <title>The DNA sequence of human chromosome 7.</title>
        <authorList>
            <person name="Hillier L.W."/>
            <person name="Fulton R.S."/>
            <person name="Fulton L.A."/>
            <person name="Graves T.A."/>
            <person name="Pepin K.H."/>
            <person name="Wagner-McPherson C."/>
            <person name="Layman D."/>
            <person name="Maas J."/>
            <person name="Jaeger S."/>
            <person name="Walker R."/>
            <person name="Wylie K."/>
            <person name="Sekhon M."/>
            <person name="Becker M.C."/>
            <person name="O'Laughlin M.D."/>
            <person name="Schaller M.E."/>
            <person name="Fewell G.A."/>
            <person name="Delehaunty K.D."/>
            <person name="Miner T.L."/>
            <person name="Nash W.E."/>
            <person name="Cordes M."/>
            <person name="Du H."/>
            <person name="Sun H."/>
            <person name="Edwards J."/>
            <person name="Bradshaw-Cordum H."/>
            <person name="Ali J."/>
            <person name="Andrews S."/>
            <person name="Isak A."/>
            <person name="Vanbrunt A."/>
            <person name="Nguyen C."/>
            <person name="Du F."/>
            <person name="Lamar B."/>
            <person name="Courtney L."/>
            <person name="Kalicki J."/>
            <person name="Ozersky P."/>
            <person name="Bielicki L."/>
            <person name="Scott K."/>
            <person name="Holmes A."/>
            <person name="Harkins R."/>
            <person name="Harris A."/>
            <person name="Strong C.M."/>
            <person name="Hou S."/>
            <person name="Tomlinson C."/>
            <person name="Dauphin-Kohlberg S."/>
            <person name="Kozlowicz-Reilly A."/>
            <person name="Leonard S."/>
            <person name="Rohlfing T."/>
            <person name="Rock S.M."/>
            <person name="Tin-Wollam A.-M."/>
            <person name="Abbott A."/>
            <person name="Minx P."/>
            <person name="Maupin R."/>
            <person name="Strowmatt C."/>
            <person name="Latreille P."/>
            <person name="Miller N."/>
            <person name="Johnson D."/>
            <person name="Murray J."/>
            <person name="Woessner J.P."/>
            <person name="Wendl M.C."/>
            <person name="Yang S.-P."/>
            <person name="Schultz B.R."/>
            <person name="Wallis J.W."/>
            <person name="Spieth J."/>
            <person name="Bieri T.A."/>
            <person name="Nelson J.O."/>
            <person name="Berkowicz N."/>
            <person name="Wohldmann P.E."/>
            <person name="Cook L.L."/>
            <person name="Hickenbotham M.T."/>
            <person name="Eldred J."/>
            <person name="Williams D."/>
            <person name="Bedell J.A."/>
            <person name="Mardis E.R."/>
            <person name="Clifton S.W."/>
            <person name="Chissoe S.L."/>
            <person name="Marra M.A."/>
            <person name="Raymond C."/>
            <person name="Haugen E."/>
            <person name="Gillett W."/>
            <person name="Zhou Y."/>
            <person name="James R."/>
            <person name="Phelps K."/>
            <person name="Iadanoto S."/>
            <person name="Bubb K."/>
            <person name="Simms E."/>
            <person name="Levy R."/>
            <person name="Clendenning J."/>
            <person name="Kaul R."/>
            <person name="Kent W.J."/>
            <person name="Furey T.S."/>
            <person name="Baertsch R.A."/>
            <person name="Brent M.R."/>
            <person name="Keibler E."/>
            <person name="Flicek P."/>
            <person name="Bork P."/>
            <person name="Suyama M."/>
            <person name="Bailey J.A."/>
            <person name="Portnoy M.E."/>
            <person name="Torrents D."/>
            <person name="Chinwalla A.T."/>
            <person name="Gish W.R."/>
            <person name="Eddy S.R."/>
            <person name="McPherson J.D."/>
            <person name="Olson M.V."/>
            <person name="Eichler E.E."/>
            <person name="Green E.D."/>
            <person name="Waterston R.H."/>
            <person name="Wilson R.K."/>
        </authorList>
    </citation>
    <scope>NUCLEOTIDE SEQUENCE [LARGE SCALE GENOMIC DNA]</scope>
</reference>